<comment type="function">
    <text evidence="1">One of the primary rRNA binding proteins. Required for association of the 30S and 50S subunits to form the 70S ribosome, for tRNA binding and peptide bond formation. It has been suggested to have peptidyltransferase activity; this is somewhat controversial. Makes several contacts with the 16S rRNA in the 70S ribosome.</text>
</comment>
<comment type="subunit">
    <text evidence="1">Part of the 50S ribosomal subunit. Forms a bridge to the 30S subunit in the 70S ribosome.</text>
</comment>
<comment type="similarity">
    <text evidence="1">Belongs to the universal ribosomal protein uL2 family.</text>
</comment>
<evidence type="ECO:0000255" key="1">
    <source>
        <dbReference type="HAMAP-Rule" id="MF_01320"/>
    </source>
</evidence>
<evidence type="ECO:0000256" key="2">
    <source>
        <dbReference type="SAM" id="MobiDB-lite"/>
    </source>
</evidence>
<evidence type="ECO:0000305" key="3"/>
<feature type="chain" id="PRO_0000309861" description="Large ribosomal subunit protein uL2">
    <location>
        <begin position="1"/>
        <end position="274"/>
    </location>
</feature>
<feature type="region of interest" description="Disordered" evidence="2">
    <location>
        <begin position="38"/>
        <end position="57"/>
    </location>
</feature>
<feature type="region of interest" description="Disordered" evidence="2">
    <location>
        <begin position="224"/>
        <end position="256"/>
    </location>
</feature>
<feature type="compositionally biased region" description="Basic and acidic residues" evidence="2">
    <location>
        <begin position="229"/>
        <end position="239"/>
    </location>
</feature>
<keyword id="KW-0687">Ribonucleoprotein</keyword>
<keyword id="KW-0689">Ribosomal protein</keyword>
<keyword id="KW-0694">RNA-binding</keyword>
<keyword id="KW-0699">rRNA-binding</keyword>
<proteinExistence type="inferred from homology"/>
<gene>
    <name evidence="1" type="primary">rplB</name>
    <name type="ordered locus">A1S_3077</name>
</gene>
<accession>A3M980</accession>
<sequence>MPIQKCKPTSPGRRFVEKVVHDHLHKGAPYAPLVEAKKRTGGRNNNGHITTRHVGGGHKQHYRIVDFKRNKDGVPAVVERIEYDPNRTAHIALLKYADGERRYIIAPKGLRAGDKVQSGNDAPIRPGNCLPLRNMPIGSTLHNVELKIGKGAQLARSAGASVQLLGRDGSYAIIRLRSGEMRKVHVECRAVIGEVSNQENNLRSLGKAGAARWRGVRPTVRGMAMNPIDHPHGGGEGRNKGIQPVSPWGQKAKGYKTRTNKRTTKMIIRDRRVK</sequence>
<name>RL2_ACIBT</name>
<organism>
    <name type="scientific">Acinetobacter baumannii (strain ATCC 17978 / DSM 105126 / CIP 53.77 / LMG 1025 / NCDC KC755 / 5377)</name>
    <dbReference type="NCBI Taxonomy" id="400667"/>
    <lineage>
        <taxon>Bacteria</taxon>
        <taxon>Pseudomonadati</taxon>
        <taxon>Pseudomonadota</taxon>
        <taxon>Gammaproteobacteria</taxon>
        <taxon>Moraxellales</taxon>
        <taxon>Moraxellaceae</taxon>
        <taxon>Acinetobacter</taxon>
        <taxon>Acinetobacter calcoaceticus/baumannii complex</taxon>
    </lineage>
</organism>
<reference key="1">
    <citation type="journal article" date="2007" name="Genes Dev.">
        <title>New insights into Acinetobacter baumannii pathogenesis revealed by high-density pyrosequencing and transposon mutagenesis.</title>
        <authorList>
            <person name="Smith M.G."/>
            <person name="Gianoulis T.A."/>
            <person name="Pukatzki S."/>
            <person name="Mekalanos J.J."/>
            <person name="Ornston L.N."/>
            <person name="Gerstein M."/>
            <person name="Snyder M."/>
        </authorList>
    </citation>
    <scope>NUCLEOTIDE SEQUENCE [LARGE SCALE GENOMIC DNA]</scope>
    <source>
        <strain>ATCC 17978 / DSM 105126 / CIP 53.77 / LMG 1025 / NCDC KC755 / 5377</strain>
    </source>
</reference>
<protein>
    <recommendedName>
        <fullName evidence="1">Large ribosomal subunit protein uL2</fullName>
    </recommendedName>
    <alternativeName>
        <fullName evidence="3">50S ribosomal protein L2</fullName>
    </alternativeName>
</protein>
<dbReference type="EMBL" id="CP000521">
    <property type="protein sequence ID" value="ABO13474.2"/>
    <property type="molecule type" value="Genomic_DNA"/>
</dbReference>
<dbReference type="RefSeq" id="WP_001122317.1">
    <property type="nucleotide sequence ID" value="NZ_CP053098.1"/>
</dbReference>
<dbReference type="SMR" id="A3M980"/>
<dbReference type="KEGG" id="acb:A1S_3077"/>
<dbReference type="HOGENOM" id="CLU_036235_2_1_6"/>
<dbReference type="GO" id="GO:0015934">
    <property type="term" value="C:large ribosomal subunit"/>
    <property type="evidence" value="ECO:0007669"/>
    <property type="project" value="InterPro"/>
</dbReference>
<dbReference type="GO" id="GO:0019843">
    <property type="term" value="F:rRNA binding"/>
    <property type="evidence" value="ECO:0007669"/>
    <property type="project" value="UniProtKB-UniRule"/>
</dbReference>
<dbReference type="GO" id="GO:0003735">
    <property type="term" value="F:structural constituent of ribosome"/>
    <property type="evidence" value="ECO:0007669"/>
    <property type="project" value="InterPro"/>
</dbReference>
<dbReference type="GO" id="GO:0016740">
    <property type="term" value="F:transferase activity"/>
    <property type="evidence" value="ECO:0007669"/>
    <property type="project" value="InterPro"/>
</dbReference>
<dbReference type="GO" id="GO:0002181">
    <property type="term" value="P:cytoplasmic translation"/>
    <property type="evidence" value="ECO:0007669"/>
    <property type="project" value="TreeGrafter"/>
</dbReference>
<dbReference type="FunFam" id="2.30.30.30:FF:000001">
    <property type="entry name" value="50S ribosomal protein L2"/>
    <property type="match status" value="1"/>
</dbReference>
<dbReference type="FunFam" id="2.40.50.140:FF:000003">
    <property type="entry name" value="50S ribosomal protein L2"/>
    <property type="match status" value="1"/>
</dbReference>
<dbReference type="FunFam" id="4.10.950.10:FF:000001">
    <property type="entry name" value="50S ribosomal protein L2"/>
    <property type="match status" value="1"/>
</dbReference>
<dbReference type="Gene3D" id="2.30.30.30">
    <property type="match status" value="1"/>
</dbReference>
<dbReference type="Gene3D" id="2.40.50.140">
    <property type="entry name" value="Nucleic acid-binding proteins"/>
    <property type="match status" value="1"/>
</dbReference>
<dbReference type="Gene3D" id="4.10.950.10">
    <property type="entry name" value="Ribosomal protein L2, domain 3"/>
    <property type="match status" value="1"/>
</dbReference>
<dbReference type="HAMAP" id="MF_01320_B">
    <property type="entry name" value="Ribosomal_uL2_B"/>
    <property type="match status" value="1"/>
</dbReference>
<dbReference type="InterPro" id="IPR012340">
    <property type="entry name" value="NA-bd_OB-fold"/>
</dbReference>
<dbReference type="InterPro" id="IPR014722">
    <property type="entry name" value="Rib_uL2_dom2"/>
</dbReference>
<dbReference type="InterPro" id="IPR002171">
    <property type="entry name" value="Ribosomal_uL2"/>
</dbReference>
<dbReference type="InterPro" id="IPR005880">
    <property type="entry name" value="Ribosomal_uL2_bac/org-type"/>
</dbReference>
<dbReference type="InterPro" id="IPR022669">
    <property type="entry name" value="Ribosomal_uL2_C"/>
</dbReference>
<dbReference type="InterPro" id="IPR014726">
    <property type="entry name" value="Ribosomal_uL2_dom3"/>
</dbReference>
<dbReference type="InterPro" id="IPR022666">
    <property type="entry name" value="Ribosomal_uL2_RNA-bd_dom"/>
</dbReference>
<dbReference type="InterPro" id="IPR008991">
    <property type="entry name" value="Translation_prot_SH3-like_sf"/>
</dbReference>
<dbReference type="NCBIfam" id="TIGR01171">
    <property type="entry name" value="rplB_bact"/>
    <property type="match status" value="1"/>
</dbReference>
<dbReference type="PANTHER" id="PTHR13691:SF5">
    <property type="entry name" value="LARGE RIBOSOMAL SUBUNIT PROTEIN UL2M"/>
    <property type="match status" value="1"/>
</dbReference>
<dbReference type="PANTHER" id="PTHR13691">
    <property type="entry name" value="RIBOSOMAL PROTEIN L2"/>
    <property type="match status" value="1"/>
</dbReference>
<dbReference type="Pfam" id="PF00181">
    <property type="entry name" value="Ribosomal_L2"/>
    <property type="match status" value="1"/>
</dbReference>
<dbReference type="Pfam" id="PF03947">
    <property type="entry name" value="Ribosomal_L2_C"/>
    <property type="match status" value="1"/>
</dbReference>
<dbReference type="PIRSF" id="PIRSF002158">
    <property type="entry name" value="Ribosomal_L2"/>
    <property type="match status" value="1"/>
</dbReference>
<dbReference type="SMART" id="SM01383">
    <property type="entry name" value="Ribosomal_L2"/>
    <property type="match status" value="1"/>
</dbReference>
<dbReference type="SMART" id="SM01382">
    <property type="entry name" value="Ribosomal_L2_C"/>
    <property type="match status" value="1"/>
</dbReference>
<dbReference type="SUPFAM" id="SSF50249">
    <property type="entry name" value="Nucleic acid-binding proteins"/>
    <property type="match status" value="1"/>
</dbReference>
<dbReference type="SUPFAM" id="SSF50104">
    <property type="entry name" value="Translation proteins SH3-like domain"/>
    <property type="match status" value="1"/>
</dbReference>